<accession>Q8CSZ4</accession>
<comment type="function">
    <text evidence="1">Catalyzes the formation of N(4)-acetylcytidine (ac(4)C) at the wobble position of elongator tRNA(Met), using acetate and ATP as substrates. First activates an acetate ion to form acetyladenylate (Ac-AMP) and then transfers the acetyl group to tRNA to form ac(4)C34.</text>
</comment>
<comment type="catalytic activity">
    <reaction evidence="1">
        <text>cytidine(34) in elongator tRNA(Met) + acetate + ATP = N(4)-acetylcytidine(34) in elongator tRNA(Met) + AMP + diphosphate</text>
        <dbReference type="Rhea" id="RHEA:58144"/>
        <dbReference type="Rhea" id="RHEA-COMP:10693"/>
        <dbReference type="Rhea" id="RHEA-COMP:10694"/>
        <dbReference type="ChEBI" id="CHEBI:30089"/>
        <dbReference type="ChEBI" id="CHEBI:30616"/>
        <dbReference type="ChEBI" id="CHEBI:33019"/>
        <dbReference type="ChEBI" id="CHEBI:74900"/>
        <dbReference type="ChEBI" id="CHEBI:82748"/>
        <dbReference type="ChEBI" id="CHEBI:456215"/>
    </reaction>
</comment>
<comment type="subcellular location">
    <subcellularLocation>
        <location evidence="1">Cytoplasm</location>
    </subcellularLocation>
</comment>
<comment type="similarity">
    <text evidence="1">Belongs to the TmcAL family.</text>
</comment>
<dbReference type="EC" id="6.3.4.-" evidence="1"/>
<dbReference type="EMBL" id="AE015929">
    <property type="protein sequence ID" value="AAO04422.1"/>
    <property type="molecule type" value="Genomic_DNA"/>
</dbReference>
<dbReference type="RefSeq" id="NP_764380.1">
    <property type="nucleotide sequence ID" value="NC_004461.1"/>
</dbReference>
<dbReference type="RefSeq" id="WP_001830136.1">
    <property type="nucleotide sequence ID" value="NZ_WBME01000046.1"/>
</dbReference>
<dbReference type="SMR" id="Q8CSZ4"/>
<dbReference type="KEGG" id="sep:SE_0825"/>
<dbReference type="PATRIC" id="fig|176280.10.peg.799"/>
<dbReference type="eggNOG" id="COG1323">
    <property type="taxonomic scope" value="Bacteria"/>
</dbReference>
<dbReference type="HOGENOM" id="CLU_038915_0_2_9"/>
<dbReference type="OrthoDB" id="9769796at2"/>
<dbReference type="Proteomes" id="UP000001411">
    <property type="component" value="Chromosome"/>
</dbReference>
<dbReference type="GO" id="GO:0005737">
    <property type="term" value="C:cytoplasm"/>
    <property type="evidence" value="ECO:0007669"/>
    <property type="project" value="UniProtKB-SubCell"/>
</dbReference>
<dbReference type="GO" id="GO:0005524">
    <property type="term" value="F:ATP binding"/>
    <property type="evidence" value="ECO:0007669"/>
    <property type="project" value="UniProtKB-KW"/>
</dbReference>
<dbReference type="GO" id="GO:0016879">
    <property type="term" value="F:ligase activity, forming carbon-nitrogen bonds"/>
    <property type="evidence" value="ECO:0007669"/>
    <property type="project" value="UniProtKB-UniRule"/>
</dbReference>
<dbReference type="GO" id="GO:0000049">
    <property type="term" value="F:tRNA binding"/>
    <property type="evidence" value="ECO:0007669"/>
    <property type="project" value="UniProtKB-KW"/>
</dbReference>
<dbReference type="GO" id="GO:0006400">
    <property type="term" value="P:tRNA modification"/>
    <property type="evidence" value="ECO:0007669"/>
    <property type="project" value="UniProtKB-UniRule"/>
</dbReference>
<dbReference type="Gene3D" id="3.40.50.620">
    <property type="entry name" value="HUPs"/>
    <property type="match status" value="1"/>
</dbReference>
<dbReference type="HAMAP" id="MF_01539">
    <property type="entry name" value="TmcAL"/>
    <property type="match status" value="1"/>
</dbReference>
<dbReference type="InterPro" id="IPR014729">
    <property type="entry name" value="Rossmann-like_a/b/a_fold"/>
</dbReference>
<dbReference type="InterPro" id="IPR008513">
    <property type="entry name" value="tRNA(Met)_cyd_acetate_ligase"/>
</dbReference>
<dbReference type="NCBIfam" id="NF010191">
    <property type="entry name" value="PRK13670.1"/>
    <property type="match status" value="1"/>
</dbReference>
<dbReference type="PANTHER" id="PTHR37825">
    <property type="entry name" value="TRNA(MET) CYTIDINE ACETATE LIGASE"/>
    <property type="match status" value="1"/>
</dbReference>
<dbReference type="PANTHER" id="PTHR37825:SF1">
    <property type="entry name" value="TRNA(MET) CYTIDINE ACETATE LIGASE"/>
    <property type="match status" value="1"/>
</dbReference>
<dbReference type="Pfam" id="PF05636">
    <property type="entry name" value="HIGH_NTase1"/>
    <property type="match status" value="1"/>
</dbReference>
<dbReference type="SUPFAM" id="SSF52374">
    <property type="entry name" value="Nucleotidylyl transferase"/>
    <property type="match status" value="1"/>
</dbReference>
<sequence length="377" mass="43318">MKSVGLITEYNPFHNGHLFHATLSKQRSETNVTIAIMSGNFVMRGEPAIYHKFKRTEMALSAVDLVVELPLIGSLSSSDTFAEIAIKTAQYLDIDIISFGSESASLKDLQYLATQMIDYEKHPDFKEKLKQGKSYPRILSELTHNDTLLQSPNNILGISYLKAMQQFAPHMSALTIKREGSLHHQKVIDHHHFASGTSIRRSLMNDNVDWKNVVPNQIQSLYCKPHTTVEDTFPFIKHQLITQPKESLHSIYTINEGFENRLQTMIHRSDSFESLLSNLKTKRYTQTYIQRVLMNVLLNITKDDVNKEINAVRVLGMSEKGRSYLKYLKANYPNRHYITNVNQKTAHYFKNEIKATHVYNLLSNQSQTDFNTPLVRI</sequence>
<evidence type="ECO:0000255" key="1">
    <source>
        <dbReference type="HAMAP-Rule" id="MF_01539"/>
    </source>
</evidence>
<name>TMCAL_STAES</name>
<reference key="1">
    <citation type="journal article" date="2003" name="Mol. Microbiol.">
        <title>Genome-based analysis of virulence genes in a non-biofilm-forming Staphylococcus epidermidis strain (ATCC 12228).</title>
        <authorList>
            <person name="Zhang Y.-Q."/>
            <person name="Ren S.-X."/>
            <person name="Li H.-L."/>
            <person name="Wang Y.-X."/>
            <person name="Fu G."/>
            <person name="Yang J."/>
            <person name="Qin Z.-Q."/>
            <person name="Miao Y.-G."/>
            <person name="Wang W.-Y."/>
            <person name="Chen R.-S."/>
            <person name="Shen Y."/>
            <person name="Chen Z."/>
            <person name="Yuan Z.-H."/>
            <person name="Zhao G.-P."/>
            <person name="Qu D."/>
            <person name="Danchin A."/>
            <person name="Wen Y.-M."/>
        </authorList>
    </citation>
    <scope>NUCLEOTIDE SEQUENCE [LARGE SCALE GENOMIC DNA]</scope>
    <source>
        <strain>ATCC 12228 / FDA PCI 1200</strain>
    </source>
</reference>
<gene>
    <name evidence="1" type="primary">tmcAL</name>
    <name type="ordered locus">SE_0825</name>
</gene>
<organism>
    <name type="scientific">Staphylococcus epidermidis (strain ATCC 12228 / FDA PCI 1200)</name>
    <dbReference type="NCBI Taxonomy" id="176280"/>
    <lineage>
        <taxon>Bacteria</taxon>
        <taxon>Bacillati</taxon>
        <taxon>Bacillota</taxon>
        <taxon>Bacilli</taxon>
        <taxon>Bacillales</taxon>
        <taxon>Staphylococcaceae</taxon>
        <taxon>Staphylococcus</taxon>
    </lineage>
</organism>
<protein>
    <recommendedName>
        <fullName evidence="1">tRNA(Met) cytidine acetate ligase</fullName>
        <ecNumber evidence="1">6.3.4.-</ecNumber>
    </recommendedName>
</protein>
<keyword id="KW-0067">ATP-binding</keyword>
<keyword id="KW-0963">Cytoplasm</keyword>
<keyword id="KW-0436">Ligase</keyword>
<keyword id="KW-0547">Nucleotide-binding</keyword>
<keyword id="KW-0694">RNA-binding</keyword>
<keyword id="KW-0819">tRNA processing</keyword>
<keyword id="KW-0820">tRNA-binding</keyword>
<feature type="chain" id="PRO_0000147184" description="tRNA(Met) cytidine acetate ligase">
    <location>
        <begin position="1"/>
        <end position="377"/>
    </location>
</feature>
<feature type="binding site" evidence="1">
    <location>
        <begin position="7"/>
        <end position="20"/>
    </location>
    <ligand>
        <name>ATP</name>
        <dbReference type="ChEBI" id="CHEBI:30616"/>
    </ligand>
</feature>
<feature type="binding site" evidence="1">
    <location>
        <position position="100"/>
    </location>
    <ligand>
        <name>ATP</name>
        <dbReference type="ChEBI" id="CHEBI:30616"/>
    </ligand>
</feature>
<feature type="binding site" evidence="1">
    <location>
        <position position="153"/>
    </location>
    <ligand>
        <name>ATP</name>
        <dbReference type="ChEBI" id="CHEBI:30616"/>
    </ligand>
</feature>
<feature type="binding site" evidence="1">
    <location>
        <position position="178"/>
    </location>
    <ligand>
        <name>ATP</name>
        <dbReference type="ChEBI" id="CHEBI:30616"/>
    </ligand>
</feature>
<proteinExistence type="inferred from homology"/>